<dbReference type="EC" id="2.7.1.71" evidence="1"/>
<dbReference type="EMBL" id="CT978603">
    <property type="protein sequence ID" value="CAK27194.1"/>
    <property type="molecule type" value="Genomic_DNA"/>
</dbReference>
<dbReference type="SMR" id="A5GQN5"/>
<dbReference type="STRING" id="316278.SynRCC307_0291"/>
<dbReference type="KEGG" id="syr:SynRCC307_0291"/>
<dbReference type="eggNOG" id="COG0703">
    <property type="taxonomic scope" value="Bacteria"/>
</dbReference>
<dbReference type="HOGENOM" id="CLU_057607_2_3_3"/>
<dbReference type="OrthoDB" id="9800332at2"/>
<dbReference type="UniPathway" id="UPA00053">
    <property type="reaction ID" value="UER00088"/>
</dbReference>
<dbReference type="Proteomes" id="UP000001115">
    <property type="component" value="Chromosome"/>
</dbReference>
<dbReference type="GO" id="GO:0005829">
    <property type="term" value="C:cytosol"/>
    <property type="evidence" value="ECO:0007669"/>
    <property type="project" value="TreeGrafter"/>
</dbReference>
<dbReference type="GO" id="GO:0005524">
    <property type="term" value="F:ATP binding"/>
    <property type="evidence" value="ECO:0007669"/>
    <property type="project" value="UniProtKB-UniRule"/>
</dbReference>
<dbReference type="GO" id="GO:0000287">
    <property type="term" value="F:magnesium ion binding"/>
    <property type="evidence" value="ECO:0007669"/>
    <property type="project" value="UniProtKB-UniRule"/>
</dbReference>
<dbReference type="GO" id="GO:0004765">
    <property type="term" value="F:shikimate kinase activity"/>
    <property type="evidence" value="ECO:0007669"/>
    <property type="project" value="UniProtKB-UniRule"/>
</dbReference>
<dbReference type="GO" id="GO:0008652">
    <property type="term" value="P:amino acid biosynthetic process"/>
    <property type="evidence" value="ECO:0007669"/>
    <property type="project" value="UniProtKB-KW"/>
</dbReference>
<dbReference type="GO" id="GO:0009073">
    <property type="term" value="P:aromatic amino acid family biosynthetic process"/>
    <property type="evidence" value="ECO:0007669"/>
    <property type="project" value="UniProtKB-KW"/>
</dbReference>
<dbReference type="GO" id="GO:0009423">
    <property type="term" value="P:chorismate biosynthetic process"/>
    <property type="evidence" value="ECO:0007669"/>
    <property type="project" value="UniProtKB-UniRule"/>
</dbReference>
<dbReference type="CDD" id="cd00464">
    <property type="entry name" value="SK"/>
    <property type="match status" value="1"/>
</dbReference>
<dbReference type="Gene3D" id="3.40.50.300">
    <property type="entry name" value="P-loop containing nucleotide triphosphate hydrolases"/>
    <property type="match status" value="1"/>
</dbReference>
<dbReference type="HAMAP" id="MF_00109">
    <property type="entry name" value="Shikimate_kinase"/>
    <property type="match status" value="1"/>
</dbReference>
<dbReference type="InterPro" id="IPR027417">
    <property type="entry name" value="P-loop_NTPase"/>
</dbReference>
<dbReference type="InterPro" id="IPR031322">
    <property type="entry name" value="Shikimate/glucono_kinase"/>
</dbReference>
<dbReference type="InterPro" id="IPR000623">
    <property type="entry name" value="Shikimate_kinase/TSH1"/>
</dbReference>
<dbReference type="InterPro" id="IPR023000">
    <property type="entry name" value="Shikimate_kinase_CS"/>
</dbReference>
<dbReference type="PANTHER" id="PTHR21087">
    <property type="entry name" value="SHIKIMATE KINASE"/>
    <property type="match status" value="1"/>
</dbReference>
<dbReference type="PANTHER" id="PTHR21087:SF16">
    <property type="entry name" value="SHIKIMATE KINASE 1, CHLOROPLASTIC"/>
    <property type="match status" value="1"/>
</dbReference>
<dbReference type="Pfam" id="PF01202">
    <property type="entry name" value="SKI"/>
    <property type="match status" value="1"/>
</dbReference>
<dbReference type="PRINTS" id="PR01100">
    <property type="entry name" value="SHIKIMTKNASE"/>
</dbReference>
<dbReference type="SUPFAM" id="SSF52540">
    <property type="entry name" value="P-loop containing nucleoside triphosphate hydrolases"/>
    <property type="match status" value="1"/>
</dbReference>
<dbReference type="PROSITE" id="PS01128">
    <property type="entry name" value="SHIKIMATE_KINASE"/>
    <property type="match status" value="1"/>
</dbReference>
<reference key="1">
    <citation type="submission" date="2006-05" db="EMBL/GenBank/DDBJ databases">
        <authorList>
            <consortium name="Genoscope"/>
        </authorList>
    </citation>
    <scope>NUCLEOTIDE SEQUENCE [LARGE SCALE GENOMIC DNA]</scope>
    <source>
        <strain>RCC307</strain>
    </source>
</reference>
<gene>
    <name evidence="1" type="primary">aroK</name>
    <name type="ordered locus">SynRCC307_0291</name>
</gene>
<keyword id="KW-0028">Amino-acid biosynthesis</keyword>
<keyword id="KW-0057">Aromatic amino acid biosynthesis</keyword>
<keyword id="KW-0067">ATP-binding</keyword>
<keyword id="KW-0963">Cytoplasm</keyword>
<keyword id="KW-0418">Kinase</keyword>
<keyword id="KW-0460">Magnesium</keyword>
<keyword id="KW-0479">Metal-binding</keyword>
<keyword id="KW-0547">Nucleotide-binding</keyword>
<keyword id="KW-1185">Reference proteome</keyword>
<keyword id="KW-0808">Transferase</keyword>
<name>AROK_SYNR3</name>
<evidence type="ECO:0000255" key="1">
    <source>
        <dbReference type="HAMAP-Rule" id="MF_00109"/>
    </source>
</evidence>
<proteinExistence type="inferred from homology"/>
<protein>
    <recommendedName>
        <fullName evidence="1">Shikimate kinase</fullName>
        <shortName evidence="1">SK</shortName>
        <ecNumber evidence="1">2.7.1.71</ecNumber>
    </recommendedName>
</protein>
<organism>
    <name type="scientific">Synechococcus sp. (strain RCC307)</name>
    <dbReference type="NCBI Taxonomy" id="316278"/>
    <lineage>
        <taxon>Bacteria</taxon>
        <taxon>Bacillati</taxon>
        <taxon>Cyanobacteriota</taxon>
        <taxon>Cyanophyceae</taxon>
        <taxon>Synechococcales</taxon>
        <taxon>Synechococcaceae</taxon>
        <taxon>Synechococcus</taxon>
    </lineage>
</organism>
<accession>A5GQN5</accession>
<comment type="function">
    <text evidence="1">Catalyzes the specific phosphorylation of the 3-hydroxyl group of shikimic acid using ATP as a cosubstrate.</text>
</comment>
<comment type="catalytic activity">
    <reaction evidence="1">
        <text>shikimate + ATP = 3-phosphoshikimate + ADP + H(+)</text>
        <dbReference type="Rhea" id="RHEA:13121"/>
        <dbReference type="ChEBI" id="CHEBI:15378"/>
        <dbReference type="ChEBI" id="CHEBI:30616"/>
        <dbReference type="ChEBI" id="CHEBI:36208"/>
        <dbReference type="ChEBI" id="CHEBI:145989"/>
        <dbReference type="ChEBI" id="CHEBI:456216"/>
        <dbReference type="EC" id="2.7.1.71"/>
    </reaction>
</comment>
<comment type="cofactor">
    <cofactor evidence="1">
        <name>Mg(2+)</name>
        <dbReference type="ChEBI" id="CHEBI:18420"/>
    </cofactor>
    <text evidence="1">Binds 1 Mg(2+) ion per subunit.</text>
</comment>
<comment type="pathway">
    <text evidence="1">Metabolic intermediate biosynthesis; chorismate biosynthesis; chorismate from D-erythrose 4-phosphate and phosphoenolpyruvate: step 5/7.</text>
</comment>
<comment type="subunit">
    <text evidence="1">Monomer.</text>
</comment>
<comment type="subcellular location">
    <subcellularLocation>
        <location evidence="1">Cytoplasm</location>
    </subcellularLocation>
</comment>
<comment type="similarity">
    <text evidence="1">Belongs to the shikimate kinase family.</text>
</comment>
<feature type="chain" id="PRO_1000119066" description="Shikimate kinase">
    <location>
        <begin position="1"/>
        <end position="195"/>
    </location>
</feature>
<feature type="binding site" evidence="1">
    <location>
        <begin position="26"/>
        <end position="31"/>
    </location>
    <ligand>
        <name>ATP</name>
        <dbReference type="ChEBI" id="CHEBI:30616"/>
    </ligand>
</feature>
<feature type="binding site" evidence="1">
    <location>
        <position position="30"/>
    </location>
    <ligand>
        <name>Mg(2+)</name>
        <dbReference type="ChEBI" id="CHEBI:18420"/>
    </ligand>
</feature>
<feature type="binding site" evidence="1">
    <location>
        <position position="48"/>
    </location>
    <ligand>
        <name>substrate</name>
    </ligand>
</feature>
<feature type="binding site" evidence="1">
    <location>
        <position position="72"/>
    </location>
    <ligand>
        <name>substrate</name>
    </ligand>
</feature>
<feature type="binding site" evidence="1">
    <location>
        <position position="94"/>
    </location>
    <ligand>
        <name>substrate</name>
    </ligand>
</feature>
<feature type="binding site" evidence="1">
    <location>
        <position position="132"/>
    </location>
    <ligand>
        <name>ATP</name>
        <dbReference type="ChEBI" id="CHEBI:30616"/>
    </ligand>
</feature>
<feature type="binding site" evidence="1">
    <location>
        <position position="151"/>
    </location>
    <ligand>
        <name>substrate</name>
    </ligand>
</feature>
<sequence>MHPTDPSQPLGERLQGTNLYLVGMMGSGKSTVGPLLAKALGYRFLDADAVISQAAGCSIPEIFERDGEEGFRQLERQVLQQLSQWHSLVVATGGGIVTVPANWGELRQGVVIWLDVAEEELMRRLQADPGGRPLLAGDDPAGRLHGLLEKRQPLYGQADLRVSAQGEGASDISERILQQLPGLLKAPGAPQTTAP</sequence>